<evidence type="ECO:0000250" key="1"/>
<evidence type="ECO:0000250" key="2">
    <source>
        <dbReference type="UniProtKB" id="P27406"/>
    </source>
</evidence>
<evidence type="ECO:0000250" key="3">
    <source>
        <dbReference type="UniProtKB" id="Q66915"/>
    </source>
</evidence>
<evidence type="ECO:0000250" key="4">
    <source>
        <dbReference type="UniProtKB" id="Q83884"/>
    </source>
</evidence>
<evidence type="ECO:0000305" key="5"/>
<protein>
    <recommendedName>
        <fullName>Capsid protein VP1</fullName>
        <shortName>CP</shortName>
    </recommendedName>
    <alternativeName>
        <fullName>Coat protein</fullName>
    </alternativeName>
    <alternativeName>
        <fullName evidence="3">Protein 73 kDa</fullName>
    </alternativeName>
    <component>
        <recommendedName>
            <fullName evidence="3">Capsid leader protein</fullName>
            <shortName evidence="3">LC</shortName>
        </recommendedName>
        <alternativeName>
            <fullName evidence="3">Protein 14 kDa</fullName>
        </alternativeName>
    </component>
    <component>
        <recommendedName>
            <fullName>Mature capsid protein</fullName>
        </recommendedName>
        <alternativeName>
            <fullName evidence="3">Protein 59 kDa</fullName>
        </alternativeName>
    </component>
    <component>
        <recommendedName>
            <fullName>Protein 40k</fullName>
            <shortName>p40</shortName>
        </recommendedName>
    </component>
</protein>
<dbReference type="EMBL" id="M32819">
    <property type="protein sequence ID" value="AAA42925.1"/>
    <property type="molecule type" value="Genomic_RNA"/>
</dbReference>
<dbReference type="EMBL" id="U13992">
    <property type="protein sequence ID" value="AAC13993.1"/>
    <property type="molecule type" value="Genomic_RNA"/>
</dbReference>
<dbReference type="PIR" id="A40507">
    <property type="entry name" value="VCWWFF"/>
</dbReference>
<dbReference type="SMR" id="P27404"/>
<dbReference type="Proteomes" id="UP000008667">
    <property type="component" value="Genome"/>
</dbReference>
<dbReference type="GO" id="GO:0030430">
    <property type="term" value="C:host cell cytoplasm"/>
    <property type="evidence" value="ECO:0007669"/>
    <property type="project" value="UniProtKB-SubCell"/>
</dbReference>
<dbReference type="GO" id="GO:0039617">
    <property type="term" value="C:T=3 icosahedral viral capsid"/>
    <property type="evidence" value="ECO:0007669"/>
    <property type="project" value="UniProtKB-KW"/>
</dbReference>
<dbReference type="CDD" id="cd00205">
    <property type="entry name" value="rhv_like"/>
    <property type="match status" value="1"/>
</dbReference>
<dbReference type="Gene3D" id="2.60.120.20">
    <property type="match status" value="1"/>
</dbReference>
<dbReference type="InterPro" id="IPR004005">
    <property type="entry name" value="Calicivirus_coat"/>
</dbReference>
<dbReference type="InterPro" id="IPR033703">
    <property type="entry name" value="Rhv-like"/>
</dbReference>
<dbReference type="InterPro" id="IPR029053">
    <property type="entry name" value="Viral_coat"/>
</dbReference>
<dbReference type="Pfam" id="PF00915">
    <property type="entry name" value="Calici_coat"/>
    <property type="match status" value="1"/>
</dbReference>
<dbReference type="SUPFAM" id="SSF88633">
    <property type="entry name" value="Positive stranded ssRNA viruses"/>
    <property type="match status" value="1"/>
</dbReference>
<reference key="1">
    <citation type="journal article" date="1991" name="J. Virol.">
        <title>Nucleotide sequence and expression of the capsid protein gene of feline calicivirus.</title>
        <authorList>
            <person name="Neill J.D."/>
            <person name="Reardon I.M."/>
            <person name="Heinrikson R.L."/>
        </authorList>
    </citation>
    <scope>NUCLEOTIDE SEQUENCE [GENOMIC RNA]</scope>
    <scope>PARTIAL PROTEIN SEQUENCE</scope>
</reference>
<name>CAPSD_FCVC6</name>
<keyword id="KW-0167">Capsid protein</keyword>
<keyword id="KW-0903">Direct protein sequencing</keyword>
<keyword id="KW-1015">Disulfide bond</keyword>
<keyword id="KW-1035">Host cytoplasm</keyword>
<keyword id="KW-1142">T=3 icosahedral capsid protein</keyword>
<keyword id="KW-0946">Virion</keyword>
<feature type="chain" id="PRO_0000460228" description="Capsid protein VP1">
    <location>
        <begin position="1"/>
        <end position="668"/>
    </location>
</feature>
<feature type="chain" id="PRO_0000460229" description="Capsid leader protein">
    <location>
        <begin position="1"/>
        <end position="124"/>
    </location>
</feature>
<feature type="chain" id="PRO_0000036875" description="Mature capsid protein" evidence="1">
    <location>
        <begin position="125"/>
        <end position="668"/>
    </location>
</feature>
<feature type="chain" id="PRO_0000341979" description="Protein 40k">
    <location>
        <begin position="465" status="uncertain"/>
        <end position="668"/>
    </location>
</feature>
<feature type="site" description="Cleavage; by viral protease" evidence="2">
    <location>
        <begin position="124"/>
        <end position="125"/>
    </location>
</feature>
<feature type="site" description="Cleavage; by viral proteases" evidence="3">
    <location>
        <begin position="124"/>
        <end position="125"/>
    </location>
</feature>
<feature type="site" description="Interaction with host receptor F11R/JAM-1" evidence="2">
    <location>
        <position position="459"/>
    </location>
</feature>
<feature type="site" description="Interaction with host receptor F11R/JAM-1" evidence="2">
    <location>
        <position position="462"/>
    </location>
</feature>
<proteinExistence type="evidence at protein level"/>
<gene>
    <name type="ORF">ORF2</name>
</gene>
<accession>P27404</accession>
<organismHost>
    <name type="scientific">Felidae</name>
    <name type="common">cat family</name>
    <dbReference type="NCBI Taxonomy" id="9681"/>
</organismHost>
<comment type="function">
    <text evidence="2">Capsid protein self assembles to form an icosahedral capsid with a T=3 symmetry, about 38 nm in diameter, and consisting of 180 capsid proteins. A smaller form of capsid with a diameter of 23 nm might be capsid proteins assembled as icosahedron with T=1 symmetry. The capsid encapsulates the genomic RNA and is decorated with VP2 proteins. Attaches virion to target cells by binding to feline junctional adhesion molecule A (F11R) and/or to alpha-2,6-linked sialic acid. Once attached, the virion is endocytosed. Acidification of the endosome induces conformational change of capsid protein thereby injecting virus genomic RNA into host cytoplasm.</text>
</comment>
<comment type="function">
    <molecule>Capsid leader protein</molecule>
    <text evidence="2">May function as a viroporin.</text>
</comment>
<comment type="subunit">
    <text evidence="2 4">Homodimer (By similarity). Homomultimer (By similarity). Interacts with the minor capsid protein VP2 (By similarity). May bind to VP3 and Vpg proteins. Binds to alpha-2,6-linked sialic acid at surface of target cells (By similarity). Interacts with host F11R/JAM-1/JAM-A; this interaction allows viral binding and entry into the host cell (By similarity).</text>
</comment>
<comment type="subunit">
    <molecule>Capsid leader protein</molecule>
    <text evidence="2">Homooligomer; probably disulfide-linked.</text>
</comment>
<comment type="subcellular location">
    <molecule>Mature capsid protein</molecule>
    <subcellularLocation>
        <location evidence="3">Virion</location>
    </subcellularLocation>
    <subcellularLocation>
        <location>Host cytoplasm</location>
    </subcellularLocation>
</comment>
<comment type="PTM">
    <molecule>Capsid protein VP1</molecule>
    <text evidence="2">Cleaved by the viral protease to produce mature capsid protein (By similarity). Cleaved by host caspase-2 and caspase-6 to generate protein p40, this might be linked to the cytopathic effect of the capsid leader protein (By similarity).</text>
</comment>
<comment type="miscellaneous">
    <text evidence="2">Mostly expressed from a sgRNA. Expression from the g-RNA is low and occurs at a downstream start codon generating a smaller, truncated LC-VP1 (tLC-VP1) protein.</text>
</comment>
<comment type="similarity">
    <text evidence="5">Belongs to the caliciviridae capsid protein family.</text>
</comment>
<organism>
    <name type="scientific">Feline calicivirus (strain CFI/68 FIV)</name>
    <name type="common">FCV</name>
    <dbReference type="NCBI Taxonomy" id="11979"/>
    <lineage>
        <taxon>Viruses</taxon>
        <taxon>Riboviria</taxon>
        <taxon>Orthornavirae</taxon>
        <taxon>Pisuviricota</taxon>
        <taxon>Pisoniviricetes</taxon>
        <taxon>Picornavirales</taxon>
        <taxon>Caliciviridae</taxon>
        <taxon>Vesivirus</taxon>
        <taxon>Feline calicivirus</taxon>
    </lineage>
</organism>
<sequence>MCSTCANVLKYYDWDPHIKLVINPNKFLHVGFCDNPLMCCYPELLPEFGTMWDCDQSPLQVYLESILGDDEWSSTHEAIDPVVPPMHWDEAGKIFQPHPGVLMHHLICKVAEGWDPNLPLFRLEADDGSITTPEQGTMVGGVIAEPNAQMSTAADMATGKSVDSEWEAFFSFHTSVNWSTSETQGKILFKQSLGPLLNPYLTHLAKLYVAWSGSVDVRFSISGSGVFGGKLAAIVVPPGIDPVQSTSMLQYPHVLFDARQVEPVIFSIPDLRSTLYHLMSDTDTTSLVIMVYNDLINPYANDSNSSGCIVTVETKPGPDFKFHLLKPPGSMLTHGSIPSDLIPKSSSLWIGNRFWSDITDFVIRPFVFQANRHFDFNQETAGWSTPRFRPITITISVKESAKLGIGVATDYIVPGIPDGWPDTTIPGELVPVGDYAITNGTNNDITTAAQYDAATEIRNNTNFRGMYICGSLQRAWGDKKISNTAFITTGTVDGAKLIPSNTIDQTKIAVFQDTHANKHVQTSDDTLALLGYTGIGEEAIGADRDRVVRISVLPERGARGGNHPIFHKNSIKLGYVIRSIDVFNSQILHTSRQLSLNHYLLSPDSFAVYRIIDSNGSWFDIGIDNDGFSFVGVSSIGKLEFPLTASYMGIQLAKIRLASNIRSVMTKL</sequence>